<protein>
    <recommendedName>
        <fullName>Putative E3 ubiquitin-protein ligase XBAT35</fullName>
        <ecNumber>2.3.2.27</ecNumber>
    </recommendedName>
    <alternativeName>
        <fullName>Ankyrin repeat domain and RING finger-containing protein XBAT35</fullName>
    </alternativeName>
    <alternativeName>
        <fullName>Protein XB3 homolog 5</fullName>
    </alternativeName>
    <alternativeName>
        <fullName>RING-type E3 ubiquitin transferase XBAT35</fullName>
    </alternativeName>
</protein>
<name>XB35_ARATH</name>
<gene>
    <name type="primary">XBAT35</name>
    <name type="ordered locus">At3g23280</name>
    <name type="ORF">K14B15.19</name>
</gene>
<proteinExistence type="evidence at transcript level"/>
<evidence type="ECO:0000255" key="1">
    <source>
        <dbReference type="PROSITE-ProRule" id="PRU00175"/>
    </source>
</evidence>
<evidence type="ECO:0000256" key="2">
    <source>
        <dbReference type="SAM" id="MobiDB-lite"/>
    </source>
</evidence>
<evidence type="ECO:0000269" key="3">
    <source>
    </source>
</evidence>
<evidence type="ECO:0000303" key="4">
    <source>
    </source>
</evidence>
<evidence type="ECO:0000305" key="5"/>
<keyword id="KW-0025">Alternative splicing</keyword>
<keyword id="KW-0040">ANK repeat</keyword>
<keyword id="KW-0479">Metal-binding</keyword>
<keyword id="KW-1185">Reference proteome</keyword>
<keyword id="KW-0677">Repeat</keyword>
<keyword id="KW-0808">Transferase</keyword>
<keyword id="KW-0833">Ubl conjugation pathway</keyword>
<keyword id="KW-0862">Zinc</keyword>
<keyword id="KW-0863">Zinc-finger</keyword>
<comment type="function">
    <text evidence="3">No E3 ubiquitin-protein ligase activity observed when associated with the E2 enzyme UBC8 in vitro.</text>
</comment>
<comment type="catalytic activity">
    <reaction>
        <text>S-ubiquitinyl-[E2 ubiquitin-conjugating enzyme]-L-cysteine + [acceptor protein]-L-lysine = [E2 ubiquitin-conjugating enzyme]-L-cysteine + N(6)-ubiquitinyl-[acceptor protein]-L-lysine.</text>
        <dbReference type="EC" id="2.3.2.27"/>
    </reaction>
</comment>
<comment type="pathway">
    <text>Protein modification; protein ubiquitination.</text>
</comment>
<comment type="alternative products">
    <event type="alternative splicing"/>
    <isoform>
        <id>Q4FE47-1</id>
        <name>1</name>
        <sequence type="displayed"/>
    </isoform>
    <isoform>
        <id>Q4FE47-2</id>
        <name>2</name>
        <sequence type="described" ref="VSP_039535"/>
    </isoform>
</comment>
<comment type="sequence caution" evidence="5">
    <conflict type="erroneous gene model prediction">
        <sequence resource="EMBL-CDS" id="BAA95741"/>
    </conflict>
</comment>
<accession>Q4FE47</accession>
<accession>Q8L9Z0</accession>
<accession>Q94AX6</accession>
<accession>Q9LTC1</accession>
<sequence>MGQQQSKGELLYQQVSYGNSEGIRALHRDGGDLEWMDREGKTPLILACMNSELFDVAKTLIELGSNVNAYRPGRHAGTPLHHAAKRGLENTVKLLLSHGANPLVLNDDCQTPLEVARVKGFSNVVRAIEKHICLFSGWMREFYGPTFLDLFAPQLLSRRVWVVIVPTGSRNPTKPFKLELVVYASLQDAQPRTVMPLWKANLEEPKAKQSDTSVMIVDNSTIPSRRMKKRRVCASHGRRRPQVVRQTRLKFAPSTEGDSQQLKWFCDACKGIPQPMHPPVFLQAPPSAPPPPSEDGLAMGMNASLHTTMSDPSNLNHHSIGQASSSSGPSSSTAPPSGKASAFGFNSHGIGIVLESSPSAPPLTDDDIATVDDGPIHYPSIDSTPVDLPSAASLPASTEGERKEDGNTGTCAICLDAPSEAVCVPCGHVAGCMSCLKEIKSKNWGCPVCRAKIDQVIKLYRV</sequence>
<reference key="1">
    <citation type="journal article" date="2005" name="Plant Physiol.">
        <title>Functional analysis of the RING-type ubiquitin ligase family of Arabidopsis.</title>
        <authorList>
            <person name="Stone S.L."/>
            <person name="Hauksdottir H."/>
            <person name="Troy A."/>
            <person name="Herschleb J."/>
            <person name="Kraft E."/>
            <person name="Callis J."/>
        </authorList>
    </citation>
    <scope>NUCLEOTIDE SEQUENCE [MRNA] (ISOFORM 1)</scope>
    <scope>FUNCTION</scope>
    <source>
        <strain>cv. Columbia</strain>
        <tissue>Seedling</tissue>
    </source>
</reference>
<reference key="2">
    <citation type="journal article" date="2000" name="DNA Res.">
        <title>Structural analysis of Arabidopsis thaliana chromosome 3. I. Sequence features of the regions of 4,504,864 bp covered by sixty P1 and TAC clones.</title>
        <authorList>
            <person name="Sato S."/>
            <person name="Nakamura Y."/>
            <person name="Kaneko T."/>
            <person name="Katoh T."/>
            <person name="Asamizu E."/>
            <person name="Tabata S."/>
        </authorList>
    </citation>
    <scope>NUCLEOTIDE SEQUENCE [LARGE SCALE GENOMIC DNA]</scope>
    <source>
        <strain>cv. Columbia</strain>
    </source>
</reference>
<reference key="3">
    <citation type="journal article" date="2017" name="Plant J.">
        <title>Araport11: a complete reannotation of the Arabidopsis thaliana reference genome.</title>
        <authorList>
            <person name="Cheng C.Y."/>
            <person name="Krishnakumar V."/>
            <person name="Chan A.P."/>
            <person name="Thibaud-Nissen F."/>
            <person name="Schobel S."/>
            <person name="Town C.D."/>
        </authorList>
    </citation>
    <scope>GENOME REANNOTATION</scope>
    <source>
        <strain>cv. Columbia</strain>
    </source>
</reference>
<reference key="4">
    <citation type="journal article" date="2003" name="Science">
        <title>Empirical analysis of transcriptional activity in the Arabidopsis genome.</title>
        <authorList>
            <person name="Yamada K."/>
            <person name="Lim J."/>
            <person name="Dale J.M."/>
            <person name="Chen H."/>
            <person name="Shinn P."/>
            <person name="Palm C.J."/>
            <person name="Southwick A.M."/>
            <person name="Wu H.C."/>
            <person name="Kim C.J."/>
            <person name="Nguyen M."/>
            <person name="Pham P.K."/>
            <person name="Cheuk R.F."/>
            <person name="Karlin-Newmann G."/>
            <person name="Liu S.X."/>
            <person name="Lam B."/>
            <person name="Sakano H."/>
            <person name="Wu T."/>
            <person name="Yu G."/>
            <person name="Miranda M."/>
            <person name="Quach H.L."/>
            <person name="Tripp M."/>
            <person name="Chang C.H."/>
            <person name="Lee J.M."/>
            <person name="Toriumi M.J."/>
            <person name="Chan M.M."/>
            <person name="Tang C.C."/>
            <person name="Onodera C.S."/>
            <person name="Deng J.M."/>
            <person name="Akiyama K."/>
            <person name="Ansari Y."/>
            <person name="Arakawa T."/>
            <person name="Banh J."/>
            <person name="Banno F."/>
            <person name="Bowser L."/>
            <person name="Brooks S.Y."/>
            <person name="Carninci P."/>
            <person name="Chao Q."/>
            <person name="Choy N."/>
            <person name="Enju A."/>
            <person name="Goldsmith A.D."/>
            <person name="Gurjal M."/>
            <person name="Hansen N.F."/>
            <person name="Hayashizaki Y."/>
            <person name="Johnson-Hopson C."/>
            <person name="Hsuan V.W."/>
            <person name="Iida K."/>
            <person name="Karnes M."/>
            <person name="Khan S."/>
            <person name="Koesema E."/>
            <person name="Ishida J."/>
            <person name="Jiang P.X."/>
            <person name="Jones T."/>
            <person name="Kawai J."/>
            <person name="Kamiya A."/>
            <person name="Meyers C."/>
            <person name="Nakajima M."/>
            <person name="Narusaka M."/>
            <person name="Seki M."/>
            <person name="Sakurai T."/>
            <person name="Satou M."/>
            <person name="Tamse R."/>
            <person name="Vaysberg M."/>
            <person name="Wallender E.K."/>
            <person name="Wong C."/>
            <person name="Yamamura Y."/>
            <person name="Yuan S."/>
            <person name="Shinozaki K."/>
            <person name="Davis R.W."/>
            <person name="Theologis A."/>
            <person name="Ecker J.R."/>
        </authorList>
    </citation>
    <scope>NUCLEOTIDE SEQUENCE [LARGE SCALE MRNA] (ISOFORM 2)</scope>
    <source>
        <strain>cv. Columbia</strain>
    </source>
</reference>
<reference key="5">
    <citation type="submission" date="2002-03" db="EMBL/GenBank/DDBJ databases">
        <title>Full-length cDNA from Arabidopsis thaliana.</title>
        <authorList>
            <person name="Brover V.V."/>
            <person name="Troukhan M.E."/>
            <person name="Alexandrov N.A."/>
            <person name="Lu Y.-P."/>
            <person name="Flavell R.B."/>
            <person name="Feldmann K.A."/>
        </authorList>
    </citation>
    <scope>NUCLEOTIDE SEQUENCE [LARGE SCALE MRNA] (ISOFORM 1)</scope>
</reference>
<dbReference type="EC" id="2.3.2.27"/>
<dbReference type="EMBL" id="DQ086844">
    <property type="protein sequence ID" value="AAZ14068.1"/>
    <property type="molecule type" value="mRNA"/>
</dbReference>
<dbReference type="EMBL" id="AB025608">
    <property type="protein sequence ID" value="BAA95741.1"/>
    <property type="status" value="ALT_SEQ"/>
    <property type="molecule type" value="Genomic_DNA"/>
</dbReference>
<dbReference type="EMBL" id="CP002686">
    <property type="protein sequence ID" value="AEE76746.1"/>
    <property type="molecule type" value="Genomic_DNA"/>
</dbReference>
<dbReference type="EMBL" id="CP002686">
    <property type="protein sequence ID" value="AEE76747.1"/>
    <property type="molecule type" value="Genomic_DNA"/>
</dbReference>
<dbReference type="EMBL" id="AY045637">
    <property type="protein sequence ID" value="AAK73995.1"/>
    <property type="molecule type" value="mRNA"/>
</dbReference>
<dbReference type="EMBL" id="AY059650">
    <property type="protein sequence ID" value="AAL31143.1"/>
    <property type="molecule type" value="mRNA"/>
</dbReference>
<dbReference type="EMBL" id="AY088137">
    <property type="protein sequence ID" value="AAM65682.1"/>
    <property type="molecule type" value="mRNA"/>
</dbReference>
<dbReference type="RefSeq" id="NP_566724.1">
    <molecule id="Q4FE47-1"/>
    <property type="nucleotide sequence ID" value="NM_113229.4"/>
</dbReference>
<dbReference type="RefSeq" id="NP_850628.1">
    <molecule id="Q4FE47-2"/>
    <property type="nucleotide sequence ID" value="NM_180297.4"/>
</dbReference>
<dbReference type="SMR" id="Q4FE47"/>
<dbReference type="BioGRID" id="7239">
    <property type="interactions" value="2"/>
</dbReference>
<dbReference type="FunCoup" id="Q4FE47">
    <property type="interactions" value="298"/>
</dbReference>
<dbReference type="IntAct" id="Q4FE47">
    <property type="interactions" value="5"/>
</dbReference>
<dbReference type="STRING" id="3702.Q4FE47"/>
<dbReference type="iPTMnet" id="Q4FE47"/>
<dbReference type="PaxDb" id="3702-AT3G23280.1"/>
<dbReference type="ProteomicsDB" id="242396">
    <molecule id="Q4FE47-1"/>
</dbReference>
<dbReference type="EnsemblPlants" id="AT3G23280.1">
    <molecule id="Q4FE47-1"/>
    <property type="protein sequence ID" value="AT3G23280.1"/>
    <property type="gene ID" value="AT3G23280"/>
</dbReference>
<dbReference type="EnsemblPlants" id="AT3G23280.2">
    <molecule id="Q4FE47-2"/>
    <property type="protein sequence ID" value="AT3G23280.2"/>
    <property type="gene ID" value="AT3G23280"/>
</dbReference>
<dbReference type="GeneID" id="821907"/>
<dbReference type="Gramene" id="AT3G23280.1">
    <molecule id="Q4FE47-1"/>
    <property type="protein sequence ID" value="AT3G23280.1"/>
    <property type="gene ID" value="AT3G23280"/>
</dbReference>
<dbReference type="Gramene" id="AT3G23280.2">
    <molecule id="Q4FE47-2"/>
    <property type="protein sequence ID" value="AT3G23280.2"/>
    <property type="gene ID" value="AT3G23280"/>
</dbReference>
<dbReference type="KEGG" id="ath:AT3G23280"/>
<dbReference type="Araport" id="AT3G23280"/>
<dbReference type="TAIR" id="AT3G23280">
    <property type="gene designation" value="XBAT35"/>
</dbReference>
<dbReference type="eggNOG" id="ENOG502S3SA">
    <property type="taxonomic scope" value="Eukaryota"/>
</dbReference>
<dbReference type="InParanoid" id="Q4FE47"/>
<dbReference type="OMA" id="SMLGFWK"/>
<dbReference type="PhylomeDB" id="Q4FE47"/>
<dbReference type="UniPathway" id="UPA00143"/>
<dbReference type="PRO" id="PR:Q4FE47"/>
<dbReference type="Proteomes" id="UP000006548">
    <property type="component" value="Chromosome 3"/>
</dbReference>
<dbReference type="ExpressionAtlas" id="Q4FE47">
    <property type="expression patterns" value="baseline and differential"/>
</dbReference>
<dbReference type="GO" id="GO:0005737">
    <property type="term" value="C:cytoplasm"/>
    <property type="evidence" value="ECO:0000314"/>
    <property type="project" value="TAIR"/>
</dbReference>
<dbReference type="GO" id="GO:0005634">
    <property type="term" value="C:nucleus"/>
    <property type="evidence" value="ECO:0000314"/>
    <property type="project" value="TAIR"/>
</dbReference>
<dbReference type="GO" id="GO:0004842">
    <property type="term" value="F:ubiquitin-protein transferase activity"/>
    <property type="evidence" value="ECO:0000314"/>
    <property type="project" value="TAIR"/>
</dbReference>
<dbReference type="GO" id="GO:0008270">
    <property type="term" value="F:zinc ion binding"/>
    <property type="evidence" value="ECO:0007669"/>
    <property type="project" value="UniProtKB-KW"/>
</dbReference>
<dbReference type="GO" id="GO:0016567">
    <property type="term" value="P:protein ubiquitination"/>
    <property type="evidence" value="ECO:0007669"/>
    <property type="project" value="UniProtKB-UniPathway"/>
</dbReference>
<dbReference type="CDD" id="cd23129">
    <property type="entry name" value="RING-HC_XBAT35-like"/>
    <property type="match status" value="1"/>
</dbReference>
<dbReference type="Gene3D" id="1.25.40.20">
    <property type="entry name" value="Ankyrin repeat-containing domain"/>
    <property type="match status" value="1"/>
</dbReference>
<dbReference type="Gene3D" id="3.30.40.10">
    <property type="entry name" value="Zinc/RING finger domain, C3HC4 (zinc finger)"/>
    <property type="match status" value="1"/>
</dbReference>
<dbReference type="InterPro" id="IPR002110">
    <property type="entry name" value="Ankyrin_rpt"/>
</dbReference>
<dbReference type="InterPro" id="IPR036770">
    <property type="entry name" value="Ankyrin_rpt-contain_sf"/>
</dbReference>
<dbReference type="InterPro" id="IPR050889">
    <property type="entry name" value="Dendritic_Spine_Reg/Scaffold"/>
</dbReference>
<dbReference type="InterPro" id="IPR001841">
    <property type="entry name" value="Znf_RING"/>
</dbReference>
<dbReference type="InterPro" id="IPR013083">
    <property type="entry name" value="Znf_RING/FYVE/PHD"/>
</dbReference>
<dbReference type="PANTHER" id="PTHR24166:SF45">
    <property type="entry name" value="E3 UBIQUITIN-PROTEIN LIGASE XBAT35"/>
    <property type="match status" value="1"/>
</dbReference>
<dbReference type="PANTHER" id="PTHR24166">
    <property type="entry name" value="ROLLING PEBBLES, ISOFORM B"/>
    <property type="match status" value="1"/>
</dbReference>
<dbReference type="Pfam" id="PF00023">
    <property type="entry name" value="Ank"/>
    <property type="match status" value="1"/>
</dbReference>
<dbReference type="Pfam" id="PF12796">
    <property type="entry name" value="Ank_2"/>
    <property type="match status" value="1"/>
</dbReference>
<dbReference type="Pfam" id="PF13920">
    <property type="entry name" value="zf-C3HC4_3"/>
    <property type="match status" value="1"/>
</dbReference>
<dbReference type="SMART" id="SM00248">
    <property type="entry name" value="ANK"/>
    <property type="match status" value="2"/>
</dbReference>
<dbReference type="SMART" id="SM00184">
    <property type="entry name" value="RING"/>
    <property type="match status" value="1"/>
</dbReference>
<dbReference type="SUPFAM" id="SSF48403">
    <property type="entry name" value="Ankyrin repeat"/>
    <property type="match status" value="1"/>
</dbReference>
<dbReference type="SUPFAM" id="SSF57850">
    <property type="entry name" value="RING/U-box"/>
    <property type="match status" value="1"/>
</dbReference>
<dbReference type="PROSITE" id="PS50297">
    <property type="entry name" value="ANK_REP_REGION"/>
    <property type="match status" value="1"/>
</dbReference>
<dbReference type="PROSITE" id="PS50088">
    <property type="entry name" value="ANK_REPEAT"/>
    <property type="match status" value="2"/>
</dbReference>
<dbReference type="PROSITE" id="PS50089">
    <property type="entry name" value="ZF_RING_2"/>
    <property type="match status" value="1"/>
</dbReference>
<feature type="initiator methionine" description="Removed" evidence="5">
    <location>
        <position position="1"/>
    </location>
</feature>
<feature type="chain" id="PRO_0000395743" description="Putative E3 ubiquitin-protein ligase XBAT35">
    <location>
        <begin position="2"/>
        <end position="462"/>
    </location>
</feature>
<feature type="repeat" description="ANK 1">
    <location>
        <begin position="6"/>
        <end position="35"/>
    </location>
</feature>
<feature type="repeat" description="ANK 2">
    <location>
        <begin position="39"/>
        <end position="69"/>
    </location>
</feature>
<feature type="repeat" description="ANK 3">
    <location>
        <begin position="75"/>
        <end position="104"/>
    </location>
</feature>
<feature type="zinc finger region" description="RING-type" evidence="1">
    <location>
        <begin position="411"/>
        <end position="450"/>
    </location>
</feature>
<feature type="region of interest" description="Disordered" evidence="2">
    <location>
        <begin position="277"/>
        <end position="341"/>
    </location>
</feature>
<feature type="region of interest" description="Disordered" evidence="2">
    <location>
        <begin position="356"/>
        <end position="402"/>
    </location>
</feature>
<feature type="compositionally biased region" description="Polar residues" evidence="2">
    <location>
        <begin position="304"/>
        <end position="317"/>
    </location>
</feature>
<feature type="compositionally biased region" description="Low complexity" evidence="2">
    <location>
        <begin position="319"/>
        <end position="341"/>
    </location>
</feature>
<feature type="splice variant" id="VSP_039535" description="In isoform 2." evidence="4">
    <original>IPSRRMKKRRVCASHGRRRPQVVRQ</original>
    <variation>K</variation>
    <location>
        <begin position="222"/>
        <end position="246"/>
    </location>
</feature>
<feature type="sequence conflict" description="In Ref. 4; AAM65682." evidence="5" ref="4">
    <original>E</original>
    <variation>G</variation>
    <location>
        <position position="21"/>
    </location>
</feature>
<feature type="sequence conflict" description="In Ref. 4; AAM65682." evidence="5" ref="4">
    <original>F</original>
    <variation>L</variation>
    <location>
        <position position="251"/>
    </location>
</feature>
<organism>
    <name type="scientific">Arabidopsis thaliana</name>
    <name type="common">Mouse-ear cress</name>
    <dbReference type="NCBI Taxonomy" id="3702"/>
    <lineage>
        <taxon>Eukaryota</taxon>
        <taxon>Viridiplantae</taxon>
        <taxon>Streptophyta</taxon>
        <taxon>Embryophyta</taxon>
        <taxon>Tracheophyta</taxon>
        <taxon>Spermatophyta</taxon>
        <taxon>Magnoliopsida</taxon>
        <taxon>eudicotyledons</taxon>
        <taxon>Gunneridae</taxon>
        <taxon>Pentapetalae</taxon>
        <taxon>rosids</taxon>
        <taxon>malvids</taxon>
        <taxon>Brassicales</taxon>
        <taxon>Brassicaceae</taxon>
        <taxon>Camelineae</taxon>
        <taxon>Arabidopsis</taxon>
    </lineage>
</organism>